<name>WUHO_DROPS</name>
<feature type="chain" id="PRO_0000370548" description="tRNA (guanine-N(7)-)-methyltransferase non-catalytic subunit wuho">
    <location>
        <begin position="1"/>
        <end position="396"/>
    </location>
</feature>
<feature type="repeat" description="WD 1">
    <location>
        <begin position="75"/>
        <end position="115"/>
    </location>
</feature>
<feature type="repeat" description="WD 2">
    <location>
        <begin position="162"/>
        <end position="201"/>
    </location>
</feature>
<feature type="repeat" description="WD 3">
    <location>
        <begin position="205"/>
        <end position="243"/>
    </location>
</feature>
<feature type="repeat" description="WD 4">
    <location>
        <begin position="302"/>
        <end position="342"/>
    </location>
</feature>
<evidence type="ECO:0000250" key="1">
    <source>
        <dbReference type="UniProtKB" id="Q9W415"/>
    </source>
</evidence>
<evidence type="ECO:0000255" key="2">
    <source>
        <dbReference type="HAMAP-Rule" id="MF_03056"/>
    </source>
</evidence>
<dbReference type="EMBL" id="CH379064">
    <property type="protein sequence ID" value="EDY72647.1"/>
    <property type="molecule type" value="Genomic_DNA"/>
</dbReference>
<dbReference type="RefSeq" id="XP_002134020.1">
    <property type="nucleotide sequence ID" value="XM_002133984.2"/>
</dbReference>
<dbReference type="SMR" id="B5DMC9"/>
<dbReference type="FunCoup" id="B5DMC9">
    <property type="interactions" value="679"/>
</dbReference>
<dbReference type="STRING" id="46245.B5DMC9"/>
<dbReference type="EnsemblMetazoa" id="FBtr0284893">
    <property type="protein sequence ID" value="FBpp0283331"/>
    <property type="gene ID" value="FBgn0248381"/>
</dbReference>
<dbReference type="GeneID" id="6901319"/>
<dbReference type="KEGG" id="dpo:6901319"/>
<dbReference type="CTD" id="31566"/>
<dbReference type="eggNOG" id="KOG3914">
    <property type="taxonomic scope" value="Eukaryota"/>
</dbReference>
<dbReference type="HOGENOM" id="CLU_054270_0_0_1"/>
<dbReference type="InParanoid" id="B5DMC9"/>
<dbReference type="OMA" id="SVWFKKR"/>
<dbReference type="UniPathway" id="UPA00989"/>
<dbReference type="Proteomes" id="UP000001819">
    <property type="component" value="Chromosome X"/>
</dbReference>
<dbReference type="Bgee" id="FBgn0248381">
    <property type="expression patterns" value="Expressed in female reproductive system and 2 other cell types or tissues"/>
</dbReference>
<dbReference type="GO" id="GO:0005829">
    <property type="term" value="C:cytosol"/>
    <property type="evidence" value="ECO:0007669"/>
    <property type="project" value="TreeGrafter"/>
</dbReference>
<dbReference type="GO" id="GO:0001674">
    <property type="term" value="C:female germ cell nucleus"/>
    <property type="evidence" value="ECO:0000250"/>
    <property type="project" value="UniProtKB"/>
</dbReference>
<dbReference type="GO" id="GO:0001673">
    <property type="term" value="C:male germ cell nucleus"/>
    <property type="evidence" value="ECO:0000250"/>
    <property type="project" value="UniProtKB"/>
</dbReference>
<dbReference type="GO" id="GO:0005634">
    <property type="term" value="C:nucleus"/>
    <property type="evidence" value="ECO:0000250"/>
    <property type="project" value="UniProtKB"/>
</dbReference>
<dbReference type="GO" id="GO:0043527">
    <property type="term" value="C:tRNA methyltransferase complex"/>
    <property type="evidence" value="ECO:0007669"/>
    <property type="project" value="TreeGrafter"/>
</dbReference>
<dbReference type="GO" id="GO:0048477">
    <property type="term" value="P:oogenesis"/>
    <property type="evidence" value="ECO:0000250"/>
    <property type="project" value="UniProtKB"/>
</dbReference>
<dbReference type="GO" id="GO:0007283">
    <property type="term" value="P:spermatogenesis"/>
    <property type="evidence" value="ECO:0000250"/>
    <property type="project" value="UniProtKB"/>
</dbReference>
<dbReference type="GO" id="GO:0106004">
    <property type="term" value="P:tRNA (guanine-N7)-methylation"/>
    <property type="evidence" value="ECO:0007669"/>
    <property type="project" value="UniProtKB-UniRule"/>
</dbReference>
<dbReference type="FunFam" id="2.130.10.10:FF:002224">
    <property type="entry name" value="tRNA (guanine-N(7)-)-methyltransferase non-catalytic subunit wuho"/>
    <property type="match status" value="1"/>
</dbReference>
<dbReference type="Gene3D" id="2.130.10.10">
    <property type="entry name" value="YVTN repeat-like/Quinoprotein amine dehydrogenase"/>
    <property type="match status" value="1"/>
</dbReference>
<dbReference type="HAMAP" id="MF_03056">
    <property type="entry name" value="TRM82"/>
    <property type="match status" value="1"/>
</dbReference>
<dbReference type="InterPro" id="IPR028884">
    <property type="entry name" value="Trm82"/>
</dbReference>
<dbReference type="InterPro" id="IPR015943">
    <property type="entry name" value="WD40/YVTN_repeat-like_dom_sf"/>
</dbReference>
<dbReference type="InterPro" id="IPR036322">
    <property type="entry name" value="WD40_repeat_dom_sf"/>
</dbReference>
<dbReference type="InterPro" id="IPR001680">
    <property type="entry name" value="WD40_rpt"/>
</dbReference>
<dbReference type="PANTHER" id="PTHR16288:SF0">
    <property type="entry name" value="TRNA (GUANINE-N(7)-)-METHYLTRANSFERASE NON-CATALYTIC SUBUNIT WDR4"/>
    <property type="match status" value="1"/>
</dbReference>
<dbReference type="PANTHER" id="PTHR16288">
    <property type="entry name" value="WD40 REPEAT PROTEIN 4"/>
    <property type="match status" value="1"/>
</dbReference>
<dbReference type="Pfam" id="PF00400">
    <property type="entry name" value="WD40"/>
    <property type="match status" value="2"/>
</dbReference>
<dbReference type="SMART" id="SM00320">
    <property type="entry name" value="WD40"/>
    <property type="match status" value="2"/>
</dbReference>
<dbReference type="SUPFAM" id="SSF50978">
    <property type="entry name" value="WD40 repeat-like"/>
    <property type="match status" value="1"/>
</dbReference>
<dbReference type="PROSITE" id="PS50082">
    <property type="entry name" value="WD_REPEATS_2"/>
    <property type="match status" value="1"/>
</dbReference>
<dbReference type="PROSITE" id="PS50294">
    <property type="entry name" value="WD_REPEATS_REGION"/>
    <property type="match status" value="1"/>
</dbReference>
<keyword id="KW-0963">Cytoplasm</keyword>
<keyword id="KW-0217">Developmental protein</keyword>
<keyword id="KW-0221">Differentiation</keyword>
<keyword id="KW-0539">Nucleus</keyword>
<keyword id="KW-0896">Oogenesis</keyword>
<keyword id="KW-1185">Reference proteome</keyword>
<keyword id="KW-0677">Repeat</keyword>
<keyword id="KW-0744">Spermatogenesis</keyword>
<keyword id="KW-0819">tRNA processing</keyword>
<keyword id="KW-0853">WD repeat</keyword>
<organism>
    <name type="scientific">Drosophila pseudoobscura pseudoobscura</name>
    <name type="common">Fruit fly</name>
    <dbReference type="NCBI Taxonomy" id="46245"/>
    <lineage>
        <taxon>Eukaryota</taxon>
        <taxon>Metazoa</taxon>
        <taxon>Ecdysozoa</taxon>
        <taxon>Arthropoda</taxon>
        <taxon>Hexapoda</taxon>
        <taxon>Insecta</taxon>
        <taxon>Pterygota</taxon>
        <taxon>Neoptera</taxon>
        <taxon>Endopterygota</taxon>
        <taxon>Diptera</taxon>
        <taxon>Brachycera</taxon>
        <taxon>Muscomorpha</taxon>
        <taxon>Ephydroidea</taxon>
        <taxon>Drosophilidae</taxon>
        <taxon>Drosophila</taxon>
        <taxon>Sophophora</taxon>
    </lineage>
</organism>
<accession>B5DMC9</accession>
<sequence>MATIFFAEPELVIGHGRKVLFLNPGDLQIFKEIELPPDLTTCGLKTVEPVPAPGHPASSSKQQPAALKEATGSVKVEVSIQNVTYSPDRQLLALTTAGQKAVLLYKSRPENAQLLSIRPLARASSALRFCSDGSSVLVTDKTGDCYQYDCVEVDASPRLLLGHLSIVYDVLWSEDQQYIITCDRDDKIRVTNYPATFDIHSYCLGHKEFVSGLAMLTEQHIISASGDKTLRVWNYTCGKELLLHELPAPAVRMLVRQLEPEKTYEVAVLFYDYVDAIGVYRLEQTTTESWSITSTQLVRAEAGTWNICNFALTDDRIYVTGAENERLTLRVYDSRNGERASGLPEGWLKMVLDNLDVAAFMPEDLSVWFKKRFDNVSEYLERKKRRIEEQKQQKCG</sequence>
<comment type="function">
    <text evidence="1 2">Required for the Mettl1-dependent formation of N(7)-methylguanine at position 46 (m7G46) in tRNA (By similarity). In the Mettl1-wuho methyltransferase complex, it is required to stabilize and induce conformational changes of the catalytic subunit (By similarity). Required for binding of nanos mRNA and repression of translation by the mei-P26-bgcn-bam-sxl complex. May cooperate with mei-P26 and nanos to derepress the BMP signaling pathway. May cooperate with mei-P26 to suppress expression of a subset of microRNAs. May cooperate with mei-P26 to regulate bam expression levels in germline cells during gametogenesis. Required to promote mitosis to meiosis transition during gametogenesis. May regulate germline cell division in part by regulating ribosome biogenesis (By similarity).</text>
</comment>
<comment type="pathway">
    <text evidence="2">tRNA modification; N(7)-methylguanine-tRNA biosynthesis.</text>
</comment>
<comment type="subunit">
    <text evidence="1 2">Forms a heterodimer with the catalytic subunit Mettl1 (By similarity). Interacts with mei-P26 and weakly interacts with bgcn; required for the function or formation of the mei-P26-bgcn-bam-sxl complex. Interacts with nanos; may be involved in mei-P26-dependent derepression of the BMP signaling pathway. Interacts with Myc; the interaction may be mediated by mei-P26 and may be involved in the regulation of ribosome biogenesis (By similarity).</text>
</comment>
<comment type="subcellular location">
    <subcellularLocation>
        <location evidence="1 2">Nucleus</location>
    </subcellularLocation>
    <subcellularLocation>
        <location evidence="1">Cytoplasm</location>
    </subcellularLocation>
    <text evidence="1">Localized to the nuclei of nurse cells, follicle cells and oocytes at early stages, from germarium to stage 4 egg chambers. Also present in the nuclei of spermatocytes and in the apical cells of the testes. In the cytoplasm of all germline and somatic cells of the ovary.</text>
</comment>
<comment type="tissue specificity">
    <text evidence="1">In testis, it is present at high level in hub cells, a niche for germline stem cells of testis. Ubiquitously expressed in all testicular cells throughout spermatogenesis. Ubiquitously expressed in all germline and somatic cells of the ovary.</text>
</comment>
<comment type="miscellaneous">
    <text evidence="1">Wuho means 'no progeny' in Chinese.</text>
</comment>
<comment type="similarity">
    <text evidence="2">Belongs to the WD repeat TRM82 family.</text>
</comment>
<reference key="1">
    <citation type="journal article" date="2005" name="Genome Res.">
        <title>Comparative genome sequencing of Drosophila pseudoobscura: chromosomal, gene, and cis-element evolution.</title>
        <authorList>
            <person name="Richards S."/>
            <person name="Liu Y."/>
            <person name="Bettencourt B.R."/>
            <person name="Hradecky P."/>
            <person name="Letovsky S."/>
            <person name="Nielsen R."/>
            <person name="Thornton K."/>
            <person name="Hubisz M.J."/>
            <person name="Chen R."/>
            <person name="Meisel R.P."/>
            <person name="Couronne O."/>
            <person name="Hua S."/>
            <person name="Smith M.A."/>
            <person name="Zhang P."/>
            <person name="Liu J."/>
            <person name="Bussemaker H.J."/>
            <person name="van Batenburg M.F."/>
            <person name="Howells S.L."/>
            <person name="Scherer S.E."/>
            <person name="Sodergren E."/>
            <person name="Matthews B.B."/>
            <person name="Crosby M.A."/>
            <person name="Schroeder A.J."/>
            <person name="Ortiz-Barrientos D."/>
            <person name="Rives C.M."/>
            <person name="Metzker M.L."/>
            <person name="Muzny D.M."/>
            <person name="Scott G."/>
            <person name="Steffen D."/>
            <person name="Wheeler D.A."/>
            <person name="Worley K.C."/>
            <person name="Havlak P."/>
            <person name="Durbin K.J."/>
            <person name="Egan A."/>
            <person name="Gill R."/>
            <person name="Hume J."/>
            <person name="Morgan M.B."/>
            <person name="Miner G."/>
            <person name="Hamilton C."/>
            <person name="Huang Y."/>
            <person name="Waldron L."/>
            <person name="Verduzco D."/>
            <person name="Clerc-Blankenburg K.P."/>
            <person name="Dubchak I."/>
            <person name="Noor M.A.F."/>
            <person name="Anderson W."/>
            <person name="White K.P."/>
            <person name="Clark A.G."/>
            <person name="Schaeffer S.W."/>
            <person name="Gelbart W.M."/>
            <person name="Weinstock G.M."/>
            <person name="Gibbs R.A."/>
        </authorList>
    </citation>
    <scope>NUCLEOTIDE SEQUENCE [LARGE SCALE GENOMIC DNA]</scope>
    <source>
        <strain>MV2-25 / Tucson 14011-0121.94</strain>
    </source>
</reference>
<protein>
    <recommendedName>
        <fullName evidence="2">tRNA (guanine-N(7)-)-methyltransferase non-catalytic subunit wuho</fullName>
    </recommendedName>
</protein>
<proteinExistence type="inferred from homology"/>
<gene>
    <name evidence="2" type="primary">wuho</name>
    <name type="ORF">GA27010</name>
</gene>